<reference key="1">
    <citation type="journal article" date="2001" name="Proc. Natl. Acad. Sci. U.S.A.">
        <title>Complete genome sequence of Caulobacter crescentus.</title>
        <authorList>
            <person name="Nierman W.C."/>
            <person name="Feldblyum T.V."/>
            <person name="Laub M.T."/>
            <person name="Paulsen I.T."/>
            <person name="Nelson K.E."/>
            <person name="Eisen J.A."/>
            <person name="Heidelberg J.F."/>
            <person name="Alley M.R.K."/>
            <person name="Ohta N."/>
            <person name="Maddock J.R."/>
            <person name="Potocka I."/>
            <person name="Nelson W.C."/>
            <person name="Newton A."/>
            <person name="Stephens C."/>
            <person name="Phadke N.D."/>
            <person name="Ely B."/>
            <person name="DeBoy R.T."/>
            <person name="Dodson R.J."/>
            <person name="Durkin A.S."/>
            <person name="Gwinn M.L."/>
            <person name="Haft D.H."/>
            <person name="Kolonay J.F."/>
            <person name="Smit J."/>
            <person name="Craven M.B."/>
            <person name="Khouri H.M."/>
            <person name="Shetty J."/>
            <person name="Berry K.J."/>
            <person name="Utterback T.R."/>
            <person name="Tran K."/>
            <person name="Wolf A.M."/>
            <person name="Vamathevan J.J."/>
            <person name="Ermolaeva M.D."/>
            <person name="White O."/>
            <person name="Salzberg S.L."/>
            <person name="Venter J.C."/>
            <person name="Shapiro L."/>
            <person name="Fraser C.M."/>
        </authorList>
    </citation>
    <scope>NUCLEOTIDE SEQUENCE [LARGE SCALE GENOMIC DNA]</scope>
    <source>
        <strain>ATCC 19089 / CIP 103742 / CB 15</strain>
    </source>
</reference>
<feature type="chain" id="PRO_0000110303" description="NAD-dependent protein deacylase">
    <location>
        <begin position="1"/>
        <end position="238"/>
    </location>
</feature>
<feature type="domain" description="Deacetylase sirtuin-type" evidence="2">
    <location>
        <begin position="1"/>
        <end position="237"/>
    </location>
</feature>
<feature type="active site" description="Proton acceptor" evidence="2">
    <location>
        <position position="112"/>
    </location>
</feature>
<feature type="binding site" evidence="1">
    <location>
        <begin position="12"/>
        <end position="31"/>
    </location>
    <ligand>
        <name>NAD(+)</name>
        <dbReference type="ChEBI" id="CHEBI:57540"/>
    </ligand>
</feature>
<feature type="binding site" evidence="1">
    <location>
        <position position="56"/>
    </location>
    <ligand>
        <name>substrate</name>
    </ligand>
</feature>
<feature type="binding site" evidence="1">
    <location>
        <position position="59"/>
    </location>
    <ligand>
        <name>substrate</name>
    </ligand>
</feature>
<feature type="binding site" evidence="1">
    <location>
        <begin position="94"/>
        <end position="97"/>
    </location>
    <ligand>
        <name>NAD(+)</name>
        <dbReference type="ChEBI" id="CHEBI:57540"/>
    </ligand>
</feature>
<feature type="binding site" evidence="1">
    <location>
        <position position="120"/>
    </location>
    <ligand>
        <name>Zn(2+)</name>
        <dbReference type="ChEBI" id="CHEBI:29105"/>
    </ligand>
</feature>
<feature type="binding site" evidence="1">
    <location>
        <position position="123"/>
    </location>
    <ligand>
        <name>Zn(2+)</name>
        <dbReference type="ChEBI" id="CHEBI:29105"/>
    </ligand>
</feature>
<feature type="binding site" evidence="1">
    <location>
        <position position="139"/>
    </location>
    <ligand>
        <name>Zn(2+)</name>
        <dbReference type="ChEBI" id="CHEBI:29105"/>
    </ligand>
</feature>
<feature type="binding site" evidence="1">
    <location>
        <position position="142"/>
    </location>
    <ligand>
        <name>Zn(2+)</name>
        <dbReference type="ChEBI" id="CHEBI:29105"/>
    </ligand>
</feature>
<feature type="binding site" evidence="1">
    <location>
        <begin position="179"/>
        <end position="181"/>
    </location>
    <ligand>
        <name>NAD(+)</name>
        <dbReference type="ChEBI" id="CHEBI:57540"/>
    </ligand>
</feature>
<feature type="binding site" evidence="1">
    <location>
        <begin position="205"/>
        <end position="207"/>
    </location>
    <ligand>
        <name>NAD(+)</name>
        <dbReference type="ChEBI" id="CHEBI:57540"/>
    </ligand>
</feature>
<feature type="binding site" evidence="1">
    <location>
        <position position="223"/>
    </location>
    <ligand>
        <name>NAD(+)</name>
        <dbReference type="ChEBI" id="CHEBI:57540"/>
    </ligand>
</feature>
<comment type="function">
    <text evidence="1">NAD-dependent lysine deacetylase and desuccinylase that specifically removes acetyl and succinyl groups on target proteins. Modulates the activities of several proteins which are inactive in their acylated form.</text>
</comment>
<comment type="catalytic activity">
    <reaction evidence="1">
        <text>N(6)-acetyl-L-lysyl-[protein] + NAD(+) + H2O = 2''-O-acetyl-ADP-D-ribose + nicotinamide + L-lysyl-[protein]</text>
        <dbReference type="Rhea" id="RHEA:43636"/>
        <dbReference type="Rhea" id="RHEA-COMP:9752"/>
        <dbReference type="Rhea" id="RHEA-COMP:10731"/>
        <dbReference type="ChEBI" id="CHEBI:15377"/>
        <dbReference type="ChEBI" id="CHEBI:17154"/>
        <dbReference type="ChEBI" id="CHEBI:29969"/>
        <dbReference type="ChEBI" id="CHEBI:57540"/>
        <dbReference type="ChEBI" id="CHEBI:61930"/>
        <dbReference type="ChEBI" id="CHEBI:83767"/>
        <dbReference type="EC" id="2.3.1.286"/>
    </reaction>
</comment>
<comment type="catalytic activity">
    <reaction evidence="1">
        <text>N(6)-succinyl-L-lysyl-[protein] + NAD(+) + H2O = 2''-O-succinyl-ADP-D-ribose + nicotinamide + L-lysyl-[protein]</text>
        <dbReference type="Rhea" id="RHEA:47668"/>
        <dbReference type="Rhea" id="RHEA-COMP:9752"/>
        <dbReference type="Rhea" id="RHEA-COMP:11877"/>
        <dbReference type="ChEBI" id="CHEBI:15377"/>
        <dbReference type="ChEBI" id="CHEBI:17154"/>
        <dbReference type="ChEBI" id="CHEBI:29969"/>
        <dbReference type="ChEBI" id="CHEBI:57540"/>
        <dbReference type="ChEBI" id="CHEBI:87830"/>
        <dbReference type="ChEBI" id="CHEBI:87832"/>
    </reaction>
</comment>
<comment type="cofactor">
    <cofactor evidence="1">
        <name>Zn(2+)</name>
        <dbReference type="ChEBI" id="CHEBI:29105"/>
    </cofactor>
    <text evidence="1">Binds 1 zinc ion per subunit.</text>
</comment>
<comment type="subcellular location">
    <subcellularLocation>
        <location evidence="1">Cytoplasm</location>
    </subcellularLocation>
</comment>
<comment type="domain">
    <text evidence="1">2 residues (Tyr-56 and Arg-59) present in a large hydrophobic pocket are probably involved in substrate specificity. They are important for desuccinylation activity, but dispensable for deacetylation activity.</text>
</comment>
<comment type="similarity">
    <text evidence="1">Belongs to the sirtuin family. Class III subfamily.</text>
</comment>
<sequence>MRGIMKVFVLTGAGVSAESGLGTFRDKDGVWTKYDLNEVATPQGFARNPALVRDFYNARRANLAGARPNAAHDALAQLEAGLARRGGELFLCTQNVDDLHEKAGCRRVIHMHGELAVTRCHHCEATWPDTGPLKPDTVCAACARDGGARPHVVWFGEIPLFMDQIEDALSAADLFVSIGTSGSVYPAAGFVAEARAMGIATCEINLEPSANAYVFDEKVYGPATEVVPAWVERLLARL</sequence>
<protein>
    <recommendedName>
        <fullName evidence="1">NAD-dependent protein deacylase</fullName>
        <ecNumber evidence="1 2">2.3.1.286</ecNumber>
    </recommendedName>
    <alternativeName>
        <fullName evidence="1">Regulatory protein SIR2 homolog</fullName>
    </alternativeName>
</protein>
<organism>
    <name type="scientific">Caulobacter vibrioides (strain ATCC 19089 / CIP 103742 / CB 15)</name>
    <name type="common">Caulobacter crescentus</name>
    <dbReference type="NCBI Taxonomy" id="190650"/>
    <lineage>
        <taxon>Bacteria</taxon>
        <taxon>Pseudomonadati</taxon>
        <taxon>Pseudomonadota</taxon>
        <taxon>Alphaproteobacteria</taxon>
        <taxon>Caulobacterales</taxon>
        <taxon>Caulobacteraceae</taxon>
        <taxon>Caulobacter</taxon>
    </lineage>
</organism>
<evidence type="ECO:0000255" key="1">
    <source>
        <dbReference type="HAMAP-Rule" id="MF_01121"/>
    </source>
</evidence>
<evidence type="ECO:0000255" key="2">
    <source>
        <dbReference type="PROSITE-ProRule" id="PRU00236"/>
    </source>
</evidence>
<dbReference type="EC" id="2.3.1.286" evidence="1 2"/>
<dbReference type="EMBL" id="AE005673">
    <property type="protein sequence ID" value="AAK25442.1"/>
    <property type="molecule type" value="Genomic_DNA"/>
</dbReference>
<dbReference type="PIR" id="F87680">
    <property type="entry name" value="F87680"/>
</dbReference>
<dbReference type="RefSeq" id="NP_422274.1">
    <property type="nucleotide sequence ID" value="NC_002696.2"/>
</dbReference>
<dbReference type="RefSeq" id="WP_010921309.1">
    <property type="nucleotide sequence ID" value="NC_002696.2"/>
</dbReference>
<dbReference type="SMR" id="Q9A2S6"/>
<dbReference type="STRING" id="190650.CC_3480"/>
<dbReference type="EnsemblBacteria" id="AAK25442">
    <property type="protein sequence ID" value="AAK25442"/>
    <property type="gene ID" value="CC_3480"/>
</dbReference>
<dbReference type="KEGG" id="ccr:CC_3480"/>
<dbReference type="PATRIC" id="fig|190650.5.peg.3490"/>
<dbReference type="eggNOG" id="COG0846">
    <property type="taxonomic scope" value="Bacteria"/>
</dbReference>
<dbReference type="HOGENOM" id="CLU_023643_3_1_5"/>
<dbReference type="BioCyc" id="CAULO:CC3480-MONOMER"/>
<dbReference type="Proteomes" id="UP000001816">
    <property type="component" value="Chromosome"/>
</dbReference>
<dbReference type="GO" id="GO:0005737">
    <property type="term" value="C:cytoplasm"/>
    <property type="evidence" value="ECO:0007669"/>
    <property type="project" value="UniProtKB-SubCell"/>
</dbReference>
<dbReference type="GO" id="GO:0017136">
    <property type="term" value="F:histone deacetylase activity, NAD-dependent"/>
    <property type="evidence" value="ECO:0007669"/>
    <property type="project" value="TreeGrafter"/>
</dbReference>
<dbReference type="GO" id="GO:0070403">
    <property type="term" value="F:NAD+ binding"/>
    <property type="evidence" value="ECO:0007669"/>
    <property type="project" value="UniProtKB-UniRule"/>
</dbReference>
<dbReference type="GO" id="GO:0036054">
    <property type="term" value="F:protein-malonyllysine demalonylase activity"/>
    <property type="evidence" value="ECO:0007669"/>
    <property type="project" value="InterPro"/>
</dbReference>
<dbReference type="GO" id="GO:0036055">
    <property type="term" value="F:protein-succinyllysine desuccinylase activity"/>
    <property type="evidence" value="ECO:0007669"/>
    <property type="project" value="UniProtKB-UniRule"/>
</dbReference>
<dbReference type="GO" id="GO:0008270">
    <property type="term" value="F:zinc ion binding"/>
    <property type="evidence" value="ECO:0007669"/>
    <property type="project" value="UniProtKB-UniRule"/>
</dbReference>
<dbReference type="CDD" id="cd01412">
    <property type="entry name" value="SIRT5_Af1_CobB"/>
    <property type="match status" value="1"/>
</dbReference>
<dbReference type="Gene3D" id="3.30.1600.10">
    <property type="entry name" value="SIR2/SIRT2 'Small Domain"/>
    <property type="match status" value="1"/>
</dbReference>
<dbReference type="Gene3D" id="3.40.50.1220">
    <property type="entry name" value="TPP-binding domain"/>
    <property type="match status" value="1"/>
</dbReference>
<dbReference type="HAMAP" id="MF_01121">
    <property type="entry name" value="Sirtuin_ClassIII"/>
    <property type="match status" value="1"/>
</dbReference>
<dbReference type="InterPro" id="IPR029035">
    <property type="entry name" value="DHS-like_NAD/FAD-binding_dom"/>
</dbReference>
<dbReference type="InterPro" id="IPR050134">
    <property type="entry name" value="NAD-dep_sirtuin_deacylases"/>
</dbReference>
<dbReference type="InterPro" id="IPR003000">
    <property type="entry name" value="Sirtuin"/>
</dbReference>
<dbReference type="InterPro" id="IPR026591">
    <property type="entry name" value="Sirtuin_cat_small_dom_sf"/>
</dbReference>
<dbReference type="InterPro" id="IPR027546">
    <property type="entry name" value="Sirtuin_class_III"/>
</dbReference>
<dbReference type="InterPro" id="IPR026590">
    <property type="entry name" value="Ssirtuin_cat_dom"/>
</dbReference>
<dbReference type="PANTHER" id="PTHR11085:SF4">
    <property type="entry name" value="NAD-DEPENDENT PROTEIN DEACYLASE"/>
    <property type="match status" value="1"/>
</dbReference>
<dbReference type="PANTHER" id="PTHR11085">
    <property type="entry name" value="NAD-DEPENDENT PROTEIN DEACYLASE SIRTUIN-5, MITOCHONDRIAL-RELATED"/>
    <property type="match status" value="1"/>
</dbReference>
<dbReference type="Pfam" id="PF02146">
    <property type="entry name" value="SIR2"/>
    <property type="match status" value="1"/>
</dbReference>
<dbReference type="SUPFAM" id="SSF52467">
    <property type="entry name" value="DHS-like NAD/FAD-binding domain"/>
    <property type="match status" value="1"/>
</dbReference>
<dbReference type="PROSITE" id="PS50305">
    <property type="entry name" value="SIRTUIN"/>
    <property type="match status" value="1"/>
</dbReference>
<gene>
    <name evidence="1" type="primary">cobB</name>
    <name type="ordered locus">CC_3480</name>
</gene>
<name>NPD_CAUVC</name>
<keyword id="KW-0963">Cytoplasm</keyword>
<keyword id="KW-0479">Metal-binding</keyword>
<keyword id="KW-0520">NAD</keyword>
<keyword id="KW-1185">Reference proteome</keyword>
<keyword id="KW-0808">Transferase</keyword>
<keyword id="KW-0862">Zinc</keyword>
<proteinExistence type="inferred from homology"/>
<accession>Q9A2S6</accession>